<feature type="signal peptide" evidence="3">
    <location>
        <begin position="1"/>
        <end position="18"/>
    </location>
</feature>
<feature type="chain" id="PRO_0000447529" description="Neurotrophic factor BDNF precursor form">
    <location>
        <begin position="19"/>
        <end position="247"/>
    </location>
</feature>
<feature type="propeptide" id="PRO_0000019627" evidence="1">
    <location>
        <begin position="19"/>
        <end position="128"/>
    </location>
</feature>
<feature type="chain" id="PRO_0000019628" description="Neurotrophic factor BDNF">
    <location>
        <begin position="129"/>
        <end position="247"/>
    </location>
</feature>
<feature type="site" description="Cleavage; by MBTPS1" evidence="2">
    <location>
        <begin position="57"/>
        <end position="58"/>
    </location>
</feature>
<feature type="glycosylation site" description="N-linked (GlcNAc...) asparagine" evidence="3">
    <location>
        <position position="121"/>
    </location>
</feature>
<feature type="disulfide bond" evidence="2">
    <location>
        <begin position="141"/>
        <end position="208"/>
    </location>
</feature>
<feature type="disulfide bond" evidence="2">
    <location>
        <begin position="186"/>
        <end position="237"/>
    </location>
</feature>
<feature type="disulfide bond" evidence="2">
    <location>
        <begin position="196"/>
        <end position="239"/>
    </location>
</feature>
<sequence>MTILFLTMVISYFGCMKAAPMKEASVRGQGSLAYPGVRTHGTLESVSGPKAGSRGLTSLADTFEHVIEELLDEDQKVRPNEENNKDADLYTSRVMLSSQVPLEPPLLFLLEEYKNYLDAANMSMRVRRHSDPARRGELSVCDSISEWVTAADKKTAVDMSGGTVTVLEKVPVSKGQLKQYFYETKCNPMGYTKEGCRGIDKRHWNSQCRTTQSYVRALTMDSKKRIGWRFIRIDTSCVCTLTIKRGR</sequence>
<evidence type="ECO:0000250" key="1">
    <source>
        <dbReference type="UniProtKB" id="P21237"/>
    </source>
</evidence>
<evidence type="ECO:0000250" key="2">
    <source>
        <dbReference type="UniProtKB" id="P23560"/>
    </source>
</evidence>
<evidence type="ECO:0000255" key="3"/>
<evidence type="ECO:0000305" key="4"/>
<keyword id="KW-0165">Cleavage on pair of basic residues</keyword>
<keyword id="KW-1015">Disulfide bond</keyword>
<keyword id="KW-0325">Glycoprotein</keyword>
<keyword id="KW-0339">Growth factor</keyword>
<keyword id="KW-1185">Reference proteome</keyword>
<keyword id="KW-0964">Secreted</keyword>
<keyword id="KW-0732">Signal</keyword>
<organism>
    <name type="scientific">Canis lupus familiaris</name>
    <name type="common">Dog</name>
    <name type="synonym">Canis familiaris</name>
    <dbReference type="NCBI Taxonomy" id="9615"/>
    <lineage>
        <taxon>Eukaryota</taxon>
        <taxon>Metazoa</taxon>
        <taxon>Chordata</taxon>
        <taxon>Craniata</taxon>
        <taxon>Vertebrata</taxon>
        <taxon>Euteleostomi</taxon>
        <taxon>Mammalia</taxon>
        <taxon>Eutheria</taxon>
        <taxon>Laurasiatheria</taxon>
        <taxon>Carnivora</taxon>
        <taxon>Caniformia</taxon>
        <taxon>Canidae</taxon>
        <taxon>Canis</taxon>
    </lineage>
</organism>
<comment type="function">
    <text evidence="1 2">Important signaling molecule that activates signaling cascades downstream of NTRK2 (By similarity). During development, promotes the survival and differentiation of selected neuronal populations of the peripheral and central nervous systems. Participates in axonal growth, pathfinding and in the modulation of dendritic growth and morphology. Major regulator of synaptic transmission and plasticity at adult synapses in many regions of the CNS. The versatility of BDNF is emphasized by its contribution to a range of adaptive neuronal responses including long-term potentiation (LTP), long-term depression (LTD), certain forms of short-term synaptic plasticity, as well as homeostatic regulation of intrinsic neuronal excitability (By similarity).</text>
</comment>
<comment type="subunit">
    <text evidence="1 2">Monomers and homodimers (By similarity). Binds to NTRK2/TRKB. Can form heterodimers with other neurotrophin family members, such as NTF3 and NTF4 (in vitro), but the physiological relevance of this is not clear (By similarity). BDNF precursor form: interacts with the heterodimer formed by NGFR and SORCS2. Mature BDNF has much lower affinity for the heterodimer formed by NGFR and SORCS2 (By similarity).</text>
</comment>
<comment type="subcellular location">
    <subcellularLocation>
        <location evidence="2">Secreted</location>
    </subcellularLocation>
</comment>
<comment type="subcellular location">
    <molecule>Neurotrophic factor BDNF precursor form</molecule>
    <subcellularLocation>
        <location evidence="2">Secreted</location>
    </subcellularLocation>
    <text evidence="2">A proportion of BDNF is secreted as immature precursor (proBDNF).</text>
</comment>
<comment type="PTM">
    <molecule>Neurotrophic factor BDNF precursor form</molecule>
    <text evidence="2">N-glycosylated and glycosulfated, contrary to mature BDNF.</text>
</comment>
<comment type="PTM">
    <text evidence="2">Mature BDNF is produced by proteolytic removal of the propeptide, catalyzed by a FURIN family member. In addition, the precursor form is proteolytically cleaved within the propeptide, but this is not an obligatory intermediate for the production of mature BDNF. Can be converted into mature BDNF by plasmin (PLG).</text>
</comment>
<comment type="similarity">
    <text evidence="4">Belongs to the NGF-beta family.</text>
</comment>
<proteinExistence type="evidence at transcript level"/>
<name>BDNF_CANLF</name>
<reference key="1">
    <citation type="submission" date="2003-03" db="EMBL/GenBank/DDBJ databases">
        <title>Canis familiaris brain-derived neurotrophic factor mRNA, complete cds.</title>
        <authorList>
            <person name="Hashizume C."/>
            <person name="Kikusui T."/>
            <person name="Takeuchi Y."/>
            <person name="Mori Y."/>
        </authorList>
    </citation>
    <scope>NUCLEOTIDE SEQUENCE [MRNA]</scope>
    <source>
        <strain>Beagle</strain>
        <tissue>Brain</tissue>
    </source>
</reference>
<reference key="2">
    <citation type="journal article" date="2001" name="Nature">
        <title>Molecular phylogenetics and the origins of placental mammals.</title>
        <authorList>
            <person name="Murphy W.J."/>
            <person name="Eizirik E."/>
            <person name="Johnson W.E."/>
            <person name="Zhang Y.-P."/>
            <person name="Ryder O.A."/>
            <person name="O'Brien S.J."/>
        </authorList>
    </citation>
    <scope>NUCLEOTIDE SEQUENCE OF 12-197</scope>
</reference>
<accession>Q7YRB4</accession>
<accession>Q9BFH2</accession>
<protein>
    <recommendedName>
        <fullName evidence="4">Neurotrophic factor BDNF precursor form</fullName>
        <shortName>proBDNF</shortName>
    </recommendedName>
    <alternativeName>
        <fullName>Brain-derived neurotrophic factor</fullName>
    </alternativeName>
    <component>
        <recommendedName>
            <fullName>Neurotrophic factor BDNF</fullName>
        </recommendedName>
    </component>
</protein>
<dbReference type="EMBL" id="AB105074">
    <property type="protein sequence ID" value="BAC81435.1"/>
    <property type="molecule type" value="mRNA"/>
</dbReference>
<dbReference type="EMBL" id="AY011499">
    <property type="protein sequence ID" value="AAG47532.1"/>
    <property type="molecule type" value="Genomic_DNA"/>
</dbReference>
<dbReference type="RefSeq" id="NP_001002975.1">
    <property type="nucleotide sequence ID" value="NM_001002975.1"/>
</dbReference>
<dbReference type="RefSeq" id="XP_005633321.1">
    <property type="nucleotide sequence ID" value="XM_005633264.2"/>
</dbReference>
<dbReference type="RefSeq" id="XP_005633322.1">
    <property type="nucleotide sequence ID" value="XM_005633265.2"/>
</dbReference>
<dbReference type="RefSeq" id="XP_005633323.1">
    <property type="nucleotide sequence ID" value="XM_005633266.2"/>
</dbReference>
<dbReference type="RefSeq" id="XP_013977887.1">
    <property type="nucleotide sequence ID" value="XM_014122412.1"/>
</dbReference>
<dbReference type="RefSeq" id="XP_038285363.1">
    <property type="nucleotide sequence ID" value="XM_038429435.1"/>
</dbReference>
<dbReference type="RefSeq" id="XP_038285364.1">
    <property type="nucleotide sequence ID" value="XM_038429436.1"/>
</dbReference>
<dbReference type="SMR" id="Q7YRB4"/>
<dbReference type="FunCoup" id="Q7YRB4">
    <property type="interactions" value="213"/>
</dbReference>
<dbReference type="STRING" id="9615.ENSCAFP00000014984"/>
<dbReference type="GlyCosmos" id="Q7YRB4">
    <property type="glycosylation" value="1 site, No reported glycans"/>
</dbReference>
<dbReference type="PaxDb" id="9612-ENSCAFP00000014984"/>
<dbReference type="GeneID" id="403461"/>
<dbReference type="KEGG" id="cfa:403461"/>
<dbReference type="CTD" id="627"/>
<dbReference type="eggNOG" id="ENOG502QRU8">
    <property type="taxonomic scope" value="Eukaryota"/>
</dbReference>
<dbReference type="InParanoid" id="Q7YRB4"/>
<dbReference type="OrthoDB" id="8959386at2759"/>
<dbReference type="Proteomes" id="UP000002254">
    <property type="component" value="Unplaced"/>
</dbReference>
<dbReference type="Proteomes" id="UP000694429">
    <property type="component" value="Unplaced"/>
</dbReference>
<dbReference type="Proteomes" id="UP000694542">
    <property type="component" value="Unplaced"/>
</dbReference>
<dbReference type="Proteomes" id="UP000805418">
    <property type="component" value="Unplaced"/>
</dbReference>
<dbReference type="GO" id="GO:0030424">
    <property type="term" value="C:axon"/>
    <property type="evidence" value="ECO:0000318"/>
    <property type="project" value="GO_Central"/>
</dbReference>
<dbReference type="GO" id="GO:0005737">
    <property type="term" value="C:cytoplasm"/>
    <property type="evidence" value="ECO:0000250"/>
    <property type="project" value="UniProtKB"/>
</dbReference>
<dbReference type="GO" id="GO:0030425">
    <property type="term" value="C:dendrite"/>
    <property type="evidence" value="ECO:0000318"/>
    <property type="project" value="GO_Central"/>
</dbReference>
<dbReference type="GO" id="GO:0005615">
    <property type="term" value="C:extracellular space"/>
    <property type="evidence" value="ECO:0000318"/>
    <property type="project" value="GO_Central"/>
</dbReference>
<dbReference type="GO" id="GO:0048471">
    <property type="term" value="C:perinuclear region of cytoplasm"/>
    <property type="evidence" value="ECO:0000250"/>
    <property type="project" value="UniProtKB"/>
</dbReference>
<dbReference type="GO" id="GO:0008021">
    <property type="term" value="C:synaptic vesicle"/>
    <property type="evidence" value="ECO:0000318"/>
    <property type="project" value="GO_Central"/>
</dbReference>
<dbReference type="GO" id="GO:0008083">
    <property type="term" value="F:growth factor activity"/>
    <property type="evidence" value="ECO:0000318"/>
    <property type="project" value="GO_Central"/>
</dbReference>
<dbReference type="GO" id="GO:0005163">
    <property type="term" value="F:nerve growth factor receptor binding"/>
    <property type="evidence" value="ECO:0000318"/>
    <property type="project" value="GO_Central"/>
</dbReference>
<dbReference type="GO" id="GO:0007169">
    <property type="term" value="P:cell surface receptor protein tyrosine kinase signaling pathway"/>
    <property type="evidence" value="ECO:0000318"/>
    <property type="project" value="GO_Central"/>
</dbReference>
<dbReference type="GO" id="GO:0050804">
    <property type="term" value="P:modulation of chemical synaptic transmission"/>
    <property type="evidence" value="ECO:0000318"/>
    <property type="project" value="GO_Central"/>
</dbReference>
<dbReference type="GO" id="GO:0043524">
    <property type="term" value="P:negative regulation of neuron apoptotic process"/>
    <property type="evidence" value="ECO:0000318"/>
    <property type="project" value="GO_Central"/>
</dbReference>
<dbReference type="GO" id="GO:0021675">
    <property type="term" value="P:nerve development"/>
    <property type="evidence" value="ECO:0000318"/>
    <property type="project" value="GO_Central"/>
</dbReference>
<dbReference type="GO" id="GO:0038180">
    <property type="term" value="P:nerve growth factor signaling pathway"/>
    <property type="evidence" value="ECO:0000318"/>
    <property type="project" value="GO_Central"/>
</dbReference>
<dbReference type="GO" id="GO:0048812">
    <property type="term" value="P:neuron projection morphogenesis"/>
    <property type="evidence" value="ECO:0000318"/>
    <property type="project" value="GO_Central"/>
</dbReference>
<dbReference type="FunFam" id="2.10.90.10:FF:000002">
    <property type="entry name" value="Brain-derived neurotrophic factor"/>
    <property type="match status" value="1"/>
</dbReference>
<dbReference type="Gene3D" id="2.10.90.10">
    <property type="entry name" value="Cystine-knot cytokines"/>
    <property type="match status" value="1"/>
</dbReference>
<dbReference type="InterPro" id="IPR020430">
    <property type="entry name" value="Brain-der_neurotrophic_factor"/>
</dbReference>
<dbReference type="InterPro" id="IPR029034">
    <property type="entry name" value="Cystine-knot_cytokine"/>
</dbReference>
<dbReference type="InterPro" id="IPR020408">
    <property type="entry name" value="Nerve_growth_factor-like"/>
</dbReference>
<dbReference type="InterPro" id="IPR002072">
    <property type="entry name" value="Nerve_growth_factor-rel"/>
</dbReference>
<dbReference type="InterPro" id="IPR019846">
    <property type="entry name" value="Nerve_growth_factor_CS"/>
</dbReference>
<dbReference type="PANTHER" id="PTHR11589:SF3">
    <property type="entry name" value="BRAIN-DERIVED NEUROTROPHIC FACTOR"/>
    <property type="match status" value="1"/>
</dbReference>
<dbReference type="PANTHER" id="PTHR11589">
    <property type="entry name" value="NERVE GROWTH FACTOR NGF -RELATED"/>
    <property type="match status" value="1"/>
</dbReference>
<dbReference type="Pfam" id="PF00243">
    <property type="entry name" value="NGF"/>
    <property type="match status" value="1"/>
</dbReference>
<dbReference type="PIRSF" id="PIRSF001789">
    <property type="entry name" value="NGF"/>
    <property type="match status" value="1"/>
</dbReference>
<dbReference type="PRINTS" id="PR01912">
    <property type="entry name" value="BDNFACTOR"/>
</dbReference>
<dbReference type="PRINTS" id="PR00268">
    <property type="entry name" value="NGF"/>
</dbReference>
<dbReference type="SMART" id="SM00140">
    <property type="entry name" value="NGF"/>
    <property type="match status" value="1"/>
</dbReference>
<dbReference type="SUPFAM" id="SSF57501">
    <property type="entry name" value="Cystine-knot cytokines"/>
    <property type="match status" value="1"/>
</dbReference>
<dbReference type="PROSITE" id="PS00248">
    <property type="entry name" value="NGF_1"/>
    <property type="match status" value="1"/>
</dbReference>
<dbReference type="PROSITE" id="PS50270">
    <property type="entry name" value="NGF_2"/>
    <property type="match status" value="1"/>
</dbReference>
<gene>
    <name type="primary">BDNF</name>
</gene>